<proteinExistence type="inferred from homology"/>
<accession>B1JUA6</accession>
<gene>
    <name evidence="1" type="primary">hisI</name>
    <name type="ordered locus">Bcenmc03_0411</name>
</gene>
<name>HIS3_BURO0</name>
<feature type="chain" id="PRO_1000135338" description="Phosphoribosyl-AMP cyclohydrolase">
    <location>
        <begin position="1"/>
        <end position="138"/>
    </location>
</feature>
<feature type="binding site" evidence="1">
    <location>
        <position position="84"/>
    </location>
    <ligand>
        <name>Mg(2+)</name>
        <dbReference type="ChEBI" id="CHEBI:18420"/>
    </ligand>
</feature>
<feature type="binding site" evidence="1">
    <location>
        <position position="85"/>
    </location>
    <ligand>
        <name>Zn(2+)</name>
        <dbReference type="ChEBI" id="CHEBI:29105"/>
        <note>ligand shared between dimeric partners</note>
    </ligand>
</feature>
<feature type="binding site" evidence="1">
    <location>
        <position position="86"/>
    </location>
    <ligand>
        <name>Mg(2+)</name>
        <dbReference type="ChEBI" id="CHEBI:18420"/>
    </ligand>
</feature>
<feature type="binding site" evidence="1">
    <location>
        <position position="88"/>
    </location>
    <ligand>
        <name>Mg(2+)</name>
        <dbReference type="ChEBI" id="CHEBI:18420"/>
    </ligand>
</feature>
<feature type="binding site" evidence="1">
    <location>
        <position position="102"/>
    </location>
    <ligand>
        <name>Zn(2+)</name>
        <dbReference type="ChEBI" id="CHEBI:29105"/>
        <note>ligand shared between dimeric partners</note>
    </ligand>
</feature>
<feature type="binding site" evidence="1">
    <location>
        <position position="109"/>
    </location>
    <ligand>
        <name>Zn(2+)</name>
        <dbReference type="ChEBI" id="CHEBI:29105"/>
        <note>ligand shared between dimeric partners</note>
    </ligand>
</feature>
<reference key="1">
    <citation type="submission" date="2008-02" db="EMBL/GenBank/DDBJ databases">
        <title>Complete sequence of chromosome 1 of Burkholderia cenocepacia MC0-3.</title>
        <authorList>
            <person name="Copeland A."/>
            <person name="Lucas S."/>
            <person name="Lapidus A."/>
            <person name="Barry K."/>
            <person name="Bruce D."/>
            <person name="Goodwin L."/>
            <person name="Glavina del Rio T."/>
            <person name="Dalin E."/>
            <person name="Tice H."/>
            <person name="Pitluck S."/>
            <person name="Chain P."/>
            <person name="Malfatti S."/>
            <person name="Shin M."/>
            <person name="Vergez L."/>
            <person name="Schmutz J."/>
            <person name="Larimer F."/>
            <person name="Land M."/>
            <person name="Hauser L."/>
            <person name="Kyrpides N."/>
            <person name="Mikhailova N."/>
            <person name="Tiedje J."/>
            <person name="Richardson P."/>
        </authorList>
    </citation>
    <scope>NUCLEOTIDE SEQUENCE [LARGE SCALE GENOMIC DNA]</scope>
    <source>
        <strain>MC0-3</strain>
    </source>
</reference>
<protein>
    <recommendedName>
        <fullName evidence="1">Phosphoribosyl-AMP cyclohydrolase</fullName>
        <shortName evidence="1">PRA-CH</shortName>
        <ecNumber evidence="1">3.5.4.19</ecNumber>
    </recommendedName>
</protein>
<sequence>MNTETKSLPAWLDKVRWDDNGLVPVIAQEASTNDVLMFAWMNREALAKTIETQRAVYYSRSRKRLWFKGEESGHVQHVHEVRLDCDEDVVLLKVEQVSGIACHTGRHSCFFQKFEGTVDGGDWVAVEPVLKDPEHIYK</sequence>
<evidence type="ECO:0000255" key="1">
    <source>
        <dbReference type="HAMAP-Rule" id="MF_01021"/>
    </source>
</evidence>
<organism>
    <name type="scientific">Burkholderia orbicola (strain MC0-3)</name>
    <dbReference type="NCBI Taxonomy" id="406425"/>
    <lineage>
        <taxon>Bacteria</taxon>
        <taxon>Pseudomonadati</taxon>
        <taxon>Pseudomonadota</taxon>
        <taxon>Betaproteobacteria</taxon>
        <taxon>Burkholderiales</taxon>
        <taxon>Burkholderiaceae</taxon>
        <taxon>Burkholderia</taxon>
        <taxon>Burkholderia cepacia complex</taxon>
        <taxon>Burkholderia orbicola</taxon>
    </lineage>
</organism>
<dbReference type="EC" id="3.5.4.19" evidence="1"/>
<dbReference type="EMBL" id="CP000958">
    <property type="protein sequence ID" value="ACA89591.1"/>
    <property type="molecule type" value="Genomic_DNA"/>
</dbReference>
<dbReference type="RefSeq" id="WP_011546604.1">
    <property type="nucleotide sequence ID" value="NC_010508.1"/>
</dbReference>
<dbReference type="SMR" id="B1JUA6"/>
<dbReference type="GeneID" id="83047214"/>
<dbReference type="KEGG" id="bcm:Bcenmc03_0411"/>
<dbReference type="HOGENOM" id="CLU_048577_5_0_4"/>
<dbReference type="UniPathway" id="UPA00031">
    <property type="reaction ID" value="UER00008"/>
</dbReference>
<dbReference type="Proteomes" id="UP000002169">
    <property type="component" value="Chromosome 1"/>
</dbReference>
<dbReference type="GO" id="GO:0005737">
    <property type="term" value="C:cytoplasm"/>
    <property type="evidence" value="ECO:0007669"/>
    <property type="project" value="UniProtKB-SubCell"/>
</dbReference>
<dbReference type="GO" id="GO:0000287">
    <property type="term" value="F:magnesium ion binding"/>
    <property type="evidence" value="ECO:0007669"/>
    <property type="project" value="UniProtKB-UniRule"/>
</dbReference>
<dbReference type="GO" id="GO:0004635">
    <property type="term" value="F:phosphoribosyl-AMP cyclohydrolase activity"/>
    <property type="evidence" value="ECO:0007669"/>
    <property type="project" value="UniProtKB-UniRule"/>
</dbReference>
<dbReference type="GO" id="GO:0008270">
    <property type="term" value="F:zinc ion binding"/>
    <property type="evidence" value="ECO:0007669"/>
    <property type="project" value="UniProtKB-UniRule"/>
</dbReference>
<dbReference type="GO" id="GO:0000105">
    <property type="term" value="P:L-histidine biosynthetic process"/>
    <property type="evidence" value="ECO:0007669"/>
    <property type="project" value="UniProtKB-UniRule"/>
</dbReference>
<dbReference type="FunFam" id="3.10.20.810:FF:000001">
    <property type="entry name" value="Histidine biosynthesis bifunctional protein HisIE"/>
    <property type="match status" value="1"/>
</dbReference>
<dbReference type="Gene3D" id="3.10.20.810">
    <property type="entry name" value="Phosphoribosyl-AMP cyclohydrolase"/>
    <property type="match status" value="1"/>
</dbReference>
<dbReference type="HAMAP" id="MF_01021">
    <property type="entry name" value="HisI"/>
    <property type="match status" value="1"/>
</dbReference>
<dbReference type="InterPro" id="IPR026660">
    <property type="entry name" value="PRA-CH"/>
</dbReference>
<dbReference type="InterPro" id="IPR002496">
    <property type="entry name" value="PRib_AMP_CycHydrolase_dom"/>
</dbReference>
<dbReference type="InterPro" id="IPR038019">
    <property type="entry name" value="PRib_AMP_CycHydrolase_sf"/>
</dbReference>
<dbReference type="NCBIfam" id="NF000768">
    <property type="entry name" value="PRK00051.1"/>
    <property type="match status" value="1"/>
</dbReference>
<dbReference type="PANTHER" id="PTHR42945">
    <property type="entry name" value="HISTIDINE BIOSYNTHESIS BIFUNCTIONAL PROTEIN"/>
    <property type="match status" value="1"/>
</dbReference>
<dbReference type="PANTHER" id="PTHR42945:SF1">
    <property type="entry name" value="HISTIDINE BIOSYNTHESIS BIFUNCTIONAL PROTEIN HIS7"/>
    <property type="match status" value="1"/>
</dbReference>
<dbReference type="Pfam" id="PF01502">
    <property type="entry name" value="PRA-CH"/>
    <property type="match status" value="1"/>
</dbReference>
<dbReference type="SUPFAM" id="SSF141734">
    <property type="entry name" value="HisI-like"/>
    <property type="match status" value="1"/>
</dbReference>
<keyword id="KW-0028">Amino-acid biosynthesis</keyword>
<keyword id="KW-0963">Cytoplasm</keyword>
<keyword id="KW-0368">Histidine biosynthesis</keyword>
<keyword id="KW-0378">Hydrolase</keyword>
<keyword id="KW-0460">Magnesium</keyword>
<keyword id="KW-0479">Metal-binding</keyword>
<keyword id="KW-0862">Zinc</keyword>
<comment type="function">
    <text evidence="1">Catalyzes the hydrolysis of the adenine ring of phosphoribosyl-AMP.</text>
</comment>
<comment type="catalytic activity">
    <reaction evidence="1">
        <text>1-(5-phospho-beta-D-ribosyl)-5'-AMP + H2O = 1-(5-phospho-beta-D-ribosyl)-5-[(5-phospho-beta-D-ribosylamino)methylideneamino]imidazole-4-carboxamide</text>
        <dbReference type="Rhea" id="RHEA:20049"/>
        <dbReference type="ChEBI" id="CHEBI:15377"/>
        <dbReference type="ChEBI" id="CHEBI:58435"/>
        <dbReference type="ChEBI" id="CHEBI:59457"/>
        <dbReference type="EC" id="3.5.4.19"/>
    </reaction>
</comment>
<comment type="cofactor">
    <cofactor evidence="1">
        <name>Mg(2+)</name>
        <dbReference type="ChEBI" id="CHEBI:18420"/>
    </cofactor>
    <text evidence="1">Binds 1 Mg(2+) ion per subunit.</text>
</comment>
<comment type="cofactor">
    <cofactor evidence="1">
        <name>Zn(2+)</name>
        <dbReference type="ChEBI" id="CHEBI:29105"/>
    </cofactor>
    <text evidence="1">Binds 1 zinc ion per subunit.</text>
</comment>
<comment type="pathway">
    <text evidence="1">Amino-acid biosynthesis; L-histidine biosynthesis; L-histidine from 5-phospho-alpha-D-ribose 1-diphosphate: step 3/9.</text>
</comment>
<comment type="subunit">
    <text evidence="1">Homodimer.</text>
</comment>
<comment type="subcellular location">
    <subcellularLocation>
        <location evidence="1">Cytoplasm</location>
    </subcellularLocation>
</comment>
<comment type="similarity">
    <text evidence="1">Belongs to the PRA-CH family.</text>
</comment>